<protein>
    <recommendedName>
        <fullName evidence="1">Large ribosomal subunit protein bL34</fullName>
    </recommendedName>
    <alternativeName>
        <fullName evidence="2">50S ribosomal protein L34</fullName>
    </alternativeName>
</protein>
<feature type="chain" id="PRO_1000013391" description="Large ribosomal subunit protein bL34">
    <location>
        <begin position="1"/>
        <end position="44"/>
    </location>
</feature>
<reference key="1">
    <citation type="submission" date="2006-01" db="EMBL/GenBank/DDBJ databases">
        <title>Complete sequence of Novosphingobium aromaticivorans DSM 12444.</title>
        <authorList>
            <consortium name="US DOE Joint Genome Institute"/>
            <person name="Copeland A."/>
            <person name="Lucas S."/>
            <person name="Lapidus A."/>
            <person name="Barry K."/>
            <person name="Detter J.C."/>
            <person name="Glavina T."/>
            <person name="Hammon N."/>
            <person name="Israni S."/>
            <person name="Pitluck S."/>
            <person name="Chain P."/>
            <person name="Malfatti S."/>
            <person name="Shin M."/>
            <person name="Vergez L."/>
            <person name="Schmutz J."/>
            <person name="Larimer F."/>
            <person name="Land M."/>
            <person name="Kyrpides N."/>
            <person name="Ivanova N."/>
            <person name="Fredrickson J."/>
            <person name="Balkwill D."/>
            <person name="Romine M.F."/>
            <person name="Richardson P."/>
        </authorList>
    </citation>
    <scope>NUCLEOTIDE SEQUENCE [LARGE SCALE GENOMIC DNA]</scope>
    <source>
        <strain>ATCC 700278 / DSM 12444 / CCUG 56034 / CIP 105152 / NBRC 16084 / F199</strain>
    </source>
</reference>
<sequence>MKRTFQPSRLVRARRHGFRARTATVGGRKVLAARRARGRKKLSA</sequence>
<dbReference type="EMBL" id="CP000248">
    <property type="protein sequence ID" value="ABD25022.1"/>
    <property type="molecule type" value="Genomic_DNA"/>
</dbReference>
<dbReference type="RefSeq" id="WP_011444236.1">
    <property type="nucleotide sequence ID" value="NC_007794.1"/>
</dbReference>
<dbReference type="SMR" id="Q2GAV1"/>
<dbReference type="STRING" id="279238.Saro_0575"/>
<dbReference type="KEGG" id="nar:Saro_0575"/>
<dbReference type="eggNOG" id="COG0230">
    <property type="taxonomic scope" value="Bacteria"/>
</dbReference>
<dbReference type="HOGENOM" id="CLU_129938_2_0_5"/>
<dbReference type="Proteomes" id="UP000009134">
    <property type="component" value="Chromosome"/>
</dbReference>
<dbReference type="GO" id="GO:1990904">
    <property type="term" value="C:ribonucleoprotein complex"/>
    <property type="evidence" value="ECO:0007669"/>
    <property type="project" value="UniProtKB-KW"/>
</dbReference>
<dbReference type="GO" id="GO:0005840">
    <property type="term" value="C:ribosome"/>
    <property type="evidence" value="ECO:0007669"/>
    <property type="project" value="UniProtKB-KW"/>
</dbReference>
<dbReference type="GO" id="GO:0003735">
    <property type="term" value="F:structural constituent of ribosome"/>
    <property type="evidence" value="ECO:0007669"/>
    <property type="project" value="InterPro"/>
</dbReference>
<dbReference type="GO" id="GO:0006412">
    <property type="term" value="P:translation"/>
    <property type="evidence" value="ECO:0007669"/>
    <property type="project" value="UniProtKB-UniRule"/>
</dbReference>
<dbReference type="FunFam" id="1.10.287.3980:FF:000001">
    <property type="entry name" value="Mitochondrial ribosomal protein L34"/>
    <property type="match status" value="1"/>
</dbReference>
<dbReference type="Gene3D" id="1.10.287.3980">
    <property type="match status" value="1"/>
</dbReference>
<dbReference type="HAMAP" id="MF_00391">
    <property type="entry name" value="Ribosomal_bL34"/>
    <property type="match status" value="1"/>
</dbReference>
<dbReference type="InterPro" id="IPR000271">
    <property type="entry name" value="Ribosomal_bL34"/>
</dbReference>
<dbReference type="InterPro" id="IPR020939">
    <property type="entry name" value="Ribosomal_bL34_CS"/>
</dbReference>
<dbReference type="NCBIfam" id="TIGR01030">
    <property type="entry name" value="rpmH_bact"/>
    <property type="match status" value="1"/>
</dbReference>
<dbReference type="PANTHER" id="PTHR14503:SF4">
    <property type="entry name" value="LARGE RIBOSOMAL SUBUNIT PROTEIN BL34M"/>
    <property type="match status" value="1"/>
</dbReference>
<dbReference type="PANTHER" id="PTHR14503">
    <property type="entry name" value="MITOCHONDRIAL RIBOSOMAL PROTEIN 34 FAMILY MEMBER"/>
    <property type="match status" value="1"/>
</dbReference>
<dbReference type="Pfam" id="PF00468">
    <property type="entry name" value="Ribosomal_L34"/>
    <property type="match status" value="1"/>
</dbReference>
<dbReference type="PROSITE" id="PS00784">
    <property type="entry name" value="RIBOSOMAL_L34"/>
    <property type="match status" value="1"/>
</dbReference>
<keyword id="KW-1185">Reference proteome</keyword>
<keyword id="KW-0687">Ribonucleoprotein</keyword>
<keyword id="KW-0689">Ribosomal protein</keyword>
<name>RL34_NOVAD</name>
<comment type="similarity">
    <text evidence="1">Belongs to the bacterial ribosomal protein bL34 family.</text>
</comment>
<organism>
    <name type="scientific">Novosphingobium aromaticivorans (strain ATCC 700278 / DSM 12444 / CCUG 56034 / CIP 105152 / NBRC 16084 / F199)</name>
    <dbReference type="NCBI Taxonomy" id="279238"/>
    <lineage>
        <taxon>Bacteria</taxon>
        <taxon>Pseudomonadati</taxon>
        <taxon>Pseudomonadota</taxon>
        <taxon>Alphaproteobacteria</taxon>
        <taxon>Sphingomonadales</taxon>
        <taxon>Sphingomonadaceae</taxon>
        <taxon>Novosphingobium</taxon>
    </lineage>
</organism>
<accession>Q2GAV1</accession>
<evidence type="ECO:0000255" key="1">
    <source>
        <dbReference type="HAMAP-Rule" id="MF_00391"/>
    </source>
</evidence>
<evidence type="ECO:0000305" key="2"/>
<proteinExistence type="inferred from homology"/>
<gene>
    <name evidence="1" type="primary">rpmH</name>
    <name type="ordered locus">Saro_0575</name>
</gene>